<organism>
    <name type="scientific">Arabidopsis thaliana</name>
    <name type="common">Mouse-ear cress</name>
    <dbReference type="NCBI Taxonomy" id="3702"/>
    <lineage>
        <taxon>Eukaryota</taxon>
        <taxon>Viridiplantae</taxon>
        <taxon>Streptophyta</taxon>
        <taxon>Embryophyta</taxon>
        <taxon>Tracheophyta</taxon>
        <taxon>Spermatophyta</taxon>
        <taxon>Magnoliopsida</taxon>
        <taxon>eudicotyledons</taxon>
        <taxon>Gunneridae</taxon>
        <taxon>Pentapetalae</taxon>
        <taxon>rosids</taxon>
        <taxon>malvids</taxon>
        <taxon>Brassicales</taxon>
        <taxon>Brassicaceae</taxon>
        <taxon>Camelineae</taxon>
        <taxon>Arabidopsis</taxon>
    </lineage>
</organism>
<protein>
    <recommendedName>
        <fullName>Uncharacterized mitochondrial protein AtMg00300</fullName>
    </recommendedName>
    <alternativeName>
        <fullName>ORF1451</fullName>
    </alternativeName>
    <alternativeName>
        <fullName>ORF145a</fullName>
    </alternativeName>
</protein>
<keyword id="KW-0496">Mitochondrion</keyword>
<keyword id="KW-1185">Reference proteome</keyword>
<dbReference type="EMBL" id="Y08501">
    <property type="protein sequence ID" value="CAA69773.1"/>
    <property type="molecule type" value="Genomic_DNA"/>
</dbReference>
<dbReference type="EMBL" id="BK010421">
    <property type="status" value="NOT_ANNOTATED_CDS"/>
    <property type="molecule type" value="Genomic_DNA"/>
</dbReference>
<dbReference type="EMBL" id="AC006225">
    <property type="protein sequence ID" value="AAM15171.1"/>
    <property type="molecule type" value="Genomic_DNA"/>
</dbReference>
<dbReference type="EMBL" id="CP002685">
    <property type="status" value="NOT_ANNOTATED_CDS"/>
    <property type="molecule type" value="Genomic_DNA"/>
</dbReference>
<dbReference type="RefSeq" id="NP_085498.1">
    <property type="nucleotide sequence ID" value="NC_001284.2"/>
</dbReference>
<dbReference type="STRING" id="3702.P93293"/>
<dbReference type="PaxDb" id="3702-ATMG00300.1"/>
<dbReference type="EnsemblPlants" id="ATMG00300.1">
    <property type="protein sequence ID" value="ATMG00300.1"/>
    <property type="gene ID" value="ATMG00300"/>
</dbReference>
<dbReference type="Gramene" id="ATMG00300.1">
    <property type="protein sequence ID" value="ATMG00300.1"/>
    <property type="gene ID" value="ATMG00300"/>
</dbReference>
<dbReference type="Araport" id="AT2G07736"/>
<dbReference type="Araport" id="ATMG00300"/>
<dbReference type="TAIR" id="AT2G07736"/>
<dbReference type="TAIR" id="ATMG00300">
    <property type="gene designation" value="ORF145A"/>
</dbReference>
<dbReference type="eggNOG" id="KOG0017">
    <property type="taxonomic scope" value="Eukaryota"/>
</dbReference>
<dbReference type="HOGENOM" id="CLU_1789507_0_0_1"/>
<dbReference type="InParanoid" id="P93293"/>
<dbReference type="OMA" id="CEHCITS"/>
<dbReference type="PRO" id="PR:P93293"/>
<dbReference type="Proteomes" id="UP000006548">
    <property type="component" value="Chromosome 2"/>
</dbReference>
<dbReference type="Proteomes" id="UP000006548">
    <property type="component" value="Mitochondrion MT"/>
</dbReference>
<dbReference type="ExpressionAtlas" id="P93293">
    <property type="expression patterns" value="baseline and differential"/>
</dbReference>
<dbReference type="GO" id="GO:0005739">
    <property type="term" value="C:mitochondrion"/>
    <property type="evidence" value="ECO:0007669"/>
    <property type="project" value="UniProtKB-SubCell"/>
</dbReference>
<dbReference type="InterPro" id="IPR025724">
    <property type="entry name" value="GAG-pre-integrase_dom"/>
</dbReference>
<dbReference type="Pfam" id="PF13976">
    <property type="entry name" value="gag_pre-integrs"/>
    <property type="match status" value="1"/>
</dbReference>
<accession>P93293</accession>
<sequence length="145" mass="16352">MRKGERMLATSKEWERPRPVEASCSEGVLKVLKGCRTILKGNRHDSLYILQGSVETGESNLAETAKDETRLWHSRLAHMSQRGMELLVKKGFLDSSKVSSLKFCEDCIYGKTHRVNFSTGQHTTKNPLDYVHSDLWGAPSVPLSF</sequence>
<gene>
    <name evidence="3" type="ordered locus">AtMg00300</name>
</gene>
<gene>
    <name evidence="2" type="ordered locus">At2g07736</name>
</gene>
<evidence type="ECO:0000305" key="1"/>
<evidence type="ECO:0000312" key="2">
    <source>
        <dbReference type="Araport" id="AT2G07736"/>
    </source>
</evidence>
<evidence type="ECO:0000312" key="3">
    <source>
        <dbReference type="Araport" id="ATMG00300"/>
    </source>
</evidence>
<geneLocation type="mitochondrion"/>
<comment type="subcellular location">
    <subcellularLocation>
        <location evidence="1">Mitochondrion</location>
    </subcellularLocation>
</comment>
<comment type="miscellaneous">
    <text>A stretch of 270 kb of the mitochondrial genome is duplicated within the centromere of chromosome 2 resulting in the duplication of the gene. The expression of this duplicated gene (At2g07736) is not demonstrated.</text>
</comment>
<name>M300_ARATH</name>
<proteinExistence type="predicted"/>
<reference key="1">
    <citation type="journal article" date="1997" name="Nat. Genet.">
        <title>The mitochondrial genome of Arabidopsis thaliana contains 57 genes in 366,924 nucleotides.</title>
        <authorList>
            <person name="Unseld M."/>
            <person name="Marienfeld J.R."/>
            <person name="Brandt P."/>
            <person name="Brennicke A."/>
        </authorList>
    </citation>
    <scope>NUCLEOTIDE SEQUENCE [LARGE SCALE GENOMIC DNA]</scope>
    <source>
        <strain>cv. C24</strain>
    </source>
</reference>
<reference key="2">
    <citation type="journal article" date="2018" name="Plant Cell">
        <title>Correction of persistent errors in Arabidopsis reference mitochondrial genomes.</title>
        <authorList>
            <person name="Sloan D.B."/>
            <person name="Wu Z."/>
            <person name="Sharbrough J."/>
        </authorList>
    </citation>
    <scope>NUCLEOTIDE SEQUENCE [LARGE SCALE GENOMIC DNA]</scope>
    <source>
        <strain>cv. Columbia</strain>
    </source>
</reference>
<reference key="3">
    <citation type="journal article" date="1999" name="Nature">
        <title>Sequence and analysis of chromosome 2 of the plant Arabidopsis thaliana.</title>
        <authorList>
            <person name="Lin X."/>
            <person name="Kaul S."/>
            <person name="Rounsley S.D."/>
            <person name="Shea T.P."/>
            <person name="Benito M.-I."/>
            <person name="Town C.D."/>
            <person name="Fujii C.Y."/>
            <person name="Mason T.M."/>
            <person name="Bowman C.L."/>
            <person name="Barnstead M.E."/>
            <person name="Feldblyum T.V."/>
            <person name="Buell C.R."/>
            <person name="Ketchum K.A."/>
            <person name="Lee J.J."/>
            <person name="Ronning C.M."/>
            <person name="Koo H.L."/>
            <person name="Moffat K.S."/>
            <person name="Cronin L.A."/>
            <person name="Shen M."/>
            <person name="Pai G."/>
            <person name="Van Aken S."/>
            <person name="Umayam L."/>
            <person name="Tallon L.J."/>
            <person name="Gill J.E."/>
            <person name="Adams M.D."/>
            <person name="Carrera A.J."/>
            <person name="Creasy T.H."/>
            <person name="Goodman H.M."/>
            <person name="Somerville C.R."/>
            <person name="Copenhaver G.P."/>
            <person name="Preuss D."/>
            <person name="Nierman W.C."/>
            <person name="White O."/>
            <person name="Eisen J.A."/>
            <person name="Salzberg S.L."/>
            <person name="Fraser C.M."/>
            <person name="Venter J.C."/>
        </authorList>
    </citation>
    <scope>NUCLEOTIDE SEQUENCE [LARGE SCALE GENOMIC DNA] (AT2G07736)</scope>
    <source>
        <strain>cv. Columbia</strain>
    </source>
</reference>
<reference key="4">
    <citation type="journal article" date="2017" name="Plant J.">
        <title>Araport11: a complete reannotation of the Arabidopsis thaliana reference genome.</title>
        <authorList>
            <person name="Cheng C.Y."/>
            <person name="Krishnakumar V."/>
            <person name="Chan A.P."/>
            <person name="Thibaud-Nissen F."/>
            <person name="Schobel S."/>
            <person name="Town C.D."/>
        </authorList>
    </citation>
    <scope>GENOME REANNOTATION (AT2G07736)</scope>
    <source>
        <strain>cv. Columbia</strain>
    </source>
</reference>
<feature type="chain" id="PRO_0000196764" description="Uncharacterized mitochondrial protein AtMg00300">
    <location>
        <begin position="1"/>
        <end position="145"/>
    </location>
</feature>